<accession>Q9CQF8</accession>
<comment type="subcellular location">
    <subcellularLocation>
        <location evidence="1">Mitochondrion</location>
    </subcellularLocation>
</comment>
<comment type="miscellaneous">
    <text>Identified only in the intact 55S subunit. It is unknown whether it belongs to the 28S or to the 39S subunit. May localize at the subunit interface and dissociate from the 55S mitoribosome during subunit separation.</text>
</comment>
<comment type="similarity">
    <text evidence="2">Belongs to the mitochondrion-specific ribosomal protein mL63 family.</text>
</comment>
<protein>
    <recommendedName>
        <fullName evidence="2">Large ribosomal subunit protein mL63</fullName>
    </recommendedName>
    <alternativeName>
        <fullName>Mitochondrial ribosomal protein 63</fullName>
    </alternativeName>
    <alternativeName>
        <fullName>Mitochondrial ribosomal protein L57</fullName>
    </alternativeName>
    <alternativeName>
        <fullName>Ribosomal protein 63, mitochondrial</fullName>
    </alternativeName>
    <alternativeName>
        <fullName>mMRP63</fullName>
    </alternativeName>
</protein>
<sequence>MFLTAVLLRGRIPGRQWIGKHRRPRTVSFQAKESMIRRLEVEAENHYWLSMPYMTAEQECGHAAERRAQAFEAIKAAATSKFPKHRYIADQLDHLNISKKWS</sequence>
<reference key="1">
    <citation type="journal article" date="2001" name="J. Biol. Chem.">
        <title>Proteomic analysis of the mammalian mitochondrial ribosome. Identification of protein components in the 28S small subunit.</title>
        <authorList>
            <person name="Suzuki T."/>
            <person name="Terasaki M."/>
            <person name="Takemoto-Hori C."/>
            <person name="Hanada T."/>
            <person name="Ueda T."/>
            <person name="Wada A."/>
            <person name="Watanabe K."/>
        </authorList>
    </citation>
    <scope>NUCLEOTIDE SEQUENCE [MRNA]</scope>
</reference>
<reference key="2">
    <citation type="journal article" date="2005" name="Science">
        <title>The transcriptional landscape of the mammalian genome.</title>
        <authorList>
            <person name="Carninci P."/>
            <person name="Kasukawa T."/>
            <person name="Katayama S."/>
            <person name="Gough J."/>
            <person name="Frith M.C."/>
            <person name="Maeda N."/>
            <person name="Oyama R."/>
            <person name="Ravasi T."/>
            <person name="Lenhard B."/>
            <person name="Wells C."/>
            <person name="Kodzius R."/>
            <person name="Shimokawa K."/>
            <person name="Bajic V.B."/>
            <person name="Brenner S.E."/>
            <person name="Batalov S."/>
            <person name="Forrest A.R."/>
            <person name="Zavolan M."/>
            <person name="Davis M.J."/>
            <person name="Wilming L.G."/>
            <person name="Aidinis V."/>
            <person name="Allen J.E."/>
            <person name="Ambesi-Impiombato A."/>
            <person name="Apweiler R."/>
            <person name="Aturaliya R.N."/>
            <person name="Bailey T.L."/>
            <person name="Bansal M."/>
            <person name="Baxter L."/>
            <person name="Beisel K.W."/>
            <person name="Bersano T."/>
            <person name="Bono H."/>
            <person name="Chalk A.M."/>
            <person name="Chiu K.P."/>
            <person name="Choudhary V."/>
            <person name="Christoffels A."/>
            <person name="Clutterbuck D.R."/>
            <person name="Crowe M.L."/>
            <person name="Dalla E."/>
            <person name="Dalrymple B.P."/>
            <person name="de Bono B."/>
            <person name="Della Gatta G."/>
            <person name="di Bernardo D."/>
            <person name="Down T."/>
            <person name="Engstrom P."/>
            <person name="Fagiolini M."/>
            <person name="Faulkner G."/>
            <person name="Fletcher C.F."/>
            <person name="Fukushima T."/>
            <person name="Furuno M."/>
            <person name="Futaki S."/>
            <person name="Gariboldi M."/>
            <person name="Georgii-Hemming P."/>
            <person name="Gingeras T.R."/>
            <person name="Gojobori T."/>
            <person name="Green R.E."/>
            <person name="Gustincich S."/>
            <person name="Harbers M."/>
            <person name="Hayashi Y."/>
            <person name="Hensch T.K."/>
            <person name="Hirokawa N."/>
            <person name="Hill D."/>
            <person name="Huminiecki L."/>
            <person name="Iacono M."/>
            <person name="Ikeo K."/>
            <person name="Iwama A."/>
            <person name="Ishikawa T."/>
            <person name="Jakt M."/>
            <person name="Kanapin A."/>
            <person name="Katoh M."/>
            <person name="Kawasawa Y."/>
            <person name="Kelso J."/>
            <person name="Kitamura H."/>
            <person name="Kitano H."/>
            <person name="Kollias G."/>
            <person name="Krishnan S.P."/>
            <person name="Kruger A."/>
            <person name="Kummerfeld S.K."/>
            <person name="Kurochkin I.V."/>
            <person name="Lareau L.F."/>
            <person name="Lazarevic D."/>
            <person name="Lipovich L."/>
            <person name="Liu J."/>
            <person name="Liuni S."/>
            <person name="McWilliam S."/>
            <person name="Madan Babu M."/>
            <person name="Madera M."/>
            <person name="Marchionni L."/>
            <person name="Matsuda H."/>
            <person name="Matsuzawa S."/>
            <person name="Miki H."/>
            <person name="Mignone F."/>
            <person name="Miyake S."/>
            <person name="Morris K."/>
            <person name="Mottagui-Tabar S."/>
            <person name="Mulder N."/>
            <person name="Nakano N."/>
            <person name="Nakauchi H."/>
            <person name="Ng P."/>
            <person name="Nilsson R."/>
            <person name="Nishiguchi S."/>
            <person name="Nishikawa S."/>
            <person name="Nori F."/>
            <person name="Ohara O."/>
            <person name="Okazaki Y."/>
            <person name="Orlando V."/>
            <person name="Pang K.C."/>
            <person name="Pavan W.J."/>
            <person name="Pavesi G."/>
            <person name="Pesole G."/>
            <person name="Petrovsky N."/>
            <person name="Piazza S."/>
            <person name="Reed J."/>
            <person name="Reid J.F."/>
            <person name="Ring B.Z."/>
            <person name="Ringwald M."/>
            <person name="Rost B."/>
            <person name="Ruan Y."/>
            <person name="Salzberg S.L."/>
            <person name="Sandelin A."/>
            <person name="Schneider C."/>
            <person name="Schoenbach C."/>
            <person name="Sekiguchi K."/>
            <person name="Semple C.A."/>
            <person name="Seno S."/>
            <person name="Sessa L."/>
            <person name="Sheng Y."/>
            <person name="Shibata Y."/>
            <person name="Shimada H."/>
            <person name="Shimada K."/>
            <person name="Silva D."/>
            <person name="Sinclair B."/>
            <person name="Sperling S."/>
            <person name="Stupka E."/>
            <person name="Sugiura K."/>
            <person name="Sultana R."/>
            <person name="Takenaka Y."/>
            <person name="Taki K."/>
            <person name="Tammoja K."/>
            <person name="Tan S.L."/>
            <person name="Tang S."/>
            <person name="Taylor M.S."/>
            <person name="Tegner J."/>
            <person name="Teichmann S.A."/>
            <person name="Ueda H.R."/>
            <person name="van Nimwegen E."/>
            <person name="Verardo R."/>
            <person name="Wei C.L."/>
            <person name="Yagi K."/>
            <person name="Yamanishi H."/>
            <person name="Zabarovsky E."/>
            <person name="Zhu S."/>
            <person name="Zimmer A."/>
            <person name="Hide W."/>
            <person name="Bult C."/>
            <person name="Grimmond S.M."/>
            <person name="Teasdale R.D."/>
            <person name="Liu E.T."/>
            <person name="Brusic V."/>
            <person name="Quackenbush J."/>
            <person name="Wahlestedt C."/>
            <person name="Mattick J.S."/>
            <person name="Hume D.A."/>
            <person name="Kai C."/>
            <person name="Sasaki D."/>
            <person name="Tomaru Y."/>
            <person name="Fukuda S."/>
            <person name="Kanamori-Katayama M."/>
            <person name="Suzuki M."/>
            <person name="Aoki J."/>
            <person name="Arakawa T."/>
            <person name="Iida J."/>
            <person name="Imamura K."/>
            <person name="Itoh M."/>
            <person name="Kato T."/>
            <person name="Kawaji H."/>
            <person name="Kawagashira N."/>
            <person name="Kawashima T."/>
            <person name="Kojima M."/>
            <person name="Kondo S."/>
            <person name="Konno H."/>
            <person name="Nakano K."/>
            <person name="Ninomiya N."/>
            <person name="Nishio T."/>
            <person name="Okada M."/>
            <person name="Plessy C."/>
            <person name="Shibata K."/>
            <person name="Shiraki T."/>
            <person name="Suzuki S."/>
            <person name="Tagami M."/>
            <person name="Waki K."/>
            <person name="Watahiki A."/>
            <person name="Okamura-Oho Y."/>
            <person name="Suzuki H."/>
            <person name="Kawai J."/>
            <person name="Hayashizaki Y."/>
        </authorList>
    </citation>
    <scope>NUCLEOTIDE SEQUENCE [LARGE SCALE MRNA]</scope>
    <source>
        <strain>C57BL/6J</strain>
        <tissue>Embryo</tissue>
        <tissue>Heart</tissue>
    </source>
</reference>
<reference key="3">
    <citation type="journal article" date="2004" name="Genome Res.">
        <title>The status, quality, and expansion of the NIH full-length cDNA project: the Mammalian Gene Collection (MGC).</title>
        <authorList>
            <consortium name="The MGC Project Team"/>
        </authorList>
    </citation>
    <scope>NUCLEOTIDE SEQUENCE [LARGE SCALE MRNA]</scope>
    <source>
        <strain>C57BL/6J</strain>
        <tissue>Brain</tissue>
        <tissue>Testis</tissue>
    </source>
</reference>
<reference key="4">
    <citation type="journal article" date="2010" name="Cell">
        <title>A tissue-specific atlas of mouse protein phosphorylation and expression.</title>
        <authorList>
            <person name="Huttlin E.L."/>
            <person name="Jedrychowski M.P."/>
            <person name="Elias J.E."/>
            <person name="Goswami T."/>
            <person name="Rad R."/>
            <person name="Beausoleil S.A."/>
            <person name="Villen J."/>
            <person name="Haas W."/>
            <person name="Sowa M.E."/>
            <person name="Gygi S.P."/>
        </authorList>
    </citation>
    <scope>IDENTIFICATION BY MASS SPECTROMETRY [LARGE SCALE ANALYSIS]</scope>
    <source>
        <tissue>Brain</tissue>
        <tissue>Heart</tissue>
        <tissue>Kidney</tissue>
        <tissue>Liver</tissue>
        <tissue>Testis</tissue>
    </source>
</reference>
<keyword id="KW-0496">Mitochondrion</keyword>
<keyword id="KW-1185">Reference proteome</keyword>
<keyword id="KW-0687">Ribonucleoprotein</keyword>
<keyword id="KW-0689">Ribosomal protein</keyword>
<gene>
    <name type="primary">Mrpl57</name>
    <name type="synonym">Mrp63</name>
</gene>
<feature type="chain" id="PRO_0000253542" description="Large ribosomal subunit protein mL63">
    <location>
        <begin position="1"/>
        <end position="102"/>
    </location>
</feature>
<proteinExistence type="evidence at protein level"/>
<dbReference type="EMBL" id="AK003130">
    <property type="protein sequence ID" value="BAB22590.1"/>
    <property type="molecule type" value="mRNA"/>
</dbReference>
<dbReference type="EMBL" id="AK010282">
    <property type="protein sequence ID" value="BAB26818.1"/>
    <property type="molecule type" value="mRNA"/>
</dbReference>
<dbReference type="EMBL" id="AK011558">
    <property type="protein sequence ID" value="BAB27696.1"/>
    <property type="molecule type" value="mRNA"/>
</dbReference>
<dbReference type="EMBL" id="AB049958">
    <property type="protein sequence ID" value="BAB41011.1"/>
    <property type="molecule type" value="mRNA"/>
</dbReference>
<dbReference type="EMBL" id="BC049555">
    <property type="protein sequence ID" value="AAH49555.1"/>
    <property type="molecule type" value="mRNA"/>
</dbReference>
<dbReference type="EMBL" id="BC055723">
    <property type="protein sequence ID" value="AAH55723.1"/>
    <property type="molecule type" value="mRNA"/>
</dbReference>
<dbReference type="CCDS" id="CCDS27161.1"/>
<dbReference type="RefSeq" id="NP_080677.1">
    <property type="nucleotide sequence ID" value="NM_026401.2"/>
</dbReference>
<dbReference type="RefSeq" id="XP_006519541.1">
    <property type="nucleotide sequence ID" value="XM_006519478.2"/>
</dbReference>
<dbReference type="SMR" id="Q9CQF8"/>
<dbReference type="ComplexPortal" id="CPX-5302">
    <property type="entry name" value="39S mitochondrial large ribosomal subunit"/>
</dbReference>
<dbReference type="FunCoup" id="Q9CQF8">
    <property type="interactions" value="893"/>
</dbReference>
<dbReference type="STRING" id="10090.ENSMUSP00000022538"/>
<dbReference type="PhosphoSitePlus" id="Q9CQF8"/>
<dbReference type="PaxDb" id="10090-ENSMUSP00000022538"/>
<dbReference type="PeptideAtlas" id="Q9CQF8"/>
<dbReference type="ProteomicsDB" id="262723"/>
<dbReference type="Pumba" id="Q9CQF8"/>
<dbReference type="Antibodypedia" id="49702">
    <property type="antibodies" value="14 antibodies from 6 providers"/>
</dbReference>
<dbReference type="DNASU" id="67840"/>
<dbReference type="Ensembl" id="ENSMUST00000022538.5">
    <property type="protein sequence ID" value="ENSMUSP00000022538.4"/>
    <property type="gene ID" value="ENSMUSG00000021967.5"/>
</dbReference>
<dbReference type="GeneID" id="67840"/>
<dbReference type="KEGG" id="mmu:67840"/>
<dbReference type="UCSC" id="uc007udq.1">
    <property type="organism name" value="mouse"/>
</dbReference>
<dbReference type="AGR" id="MGI:1915090"/>
<dbReference type="CTD" id="78988"/>
<dbReference type="MGI" id="MGI:1915090">
    <property type="gene designation" value="Mrpl57"/>
</dbReference>
<dbReference type="VEuPathDB" id="HostDB:ENSMUSG00000021967"/>
<dbReference type="eggNOG" id="ENOG502S44A">
    <property type="taxonomic scope" value="Eukaryota"/>
</dbReference>
<dbReference type="GeneTree" id="ENSGT00390000008171"/>
<dbReference type="HOGENOM" id="CLU_175792_1_0_1"/>
<dbReference type="InParanoid" id="Q9CQF8"/>
<dbReference type="OMA" id="QEFGHAA"/>
<dbReference type="OrthoDB" id="6019958at2759"/>
<dbReference type="PhylomeDB" id="Q9CQF8"/>
<dbReference type="TreeFam" id="TF324466"/>
<dbReference type="Reactome" id="R-MMU-5389840">
    <property type="pathway name" value="Mitochondrial translation elongation"/>
</dbReference>
<dbReference type="Reactome" id="R-MMU-5419276">
    <property type="pathway name" value="Mitochondrial translation termination"/>
</dbReference>
<dbReference type="BioGRID-ORCS" id="67840">
    <property type="hits" value="26 hits in 79 CRISPR screens"/>
</dbReference>
<dbReference type="ChiTaRS" id="Mrpl57">
    <property type="organism name" value="mouse"/>
</dbReference>
<dbReference type="PRO" id="PR:Q9CQF8"/>
<dbReference type="Proteomes" id="UP000000589">
    <property type="component" value="Chromosome 14"/>
</dbReference>
<dbReference type="RNAct" id="Q9CQF8">
    <property type="molecule type" value="protein"/>
</dbReference>
<dbReference type="Bgee" id="ENSMUSG00000021967">
    <property type="expression patterns" value="Expressed in bone fossa and 255 other cell types or tissues"/>
</dbReference>
<dbReference type="GO" id="GO:0005743">
    <property type="term" value="C:mitochondrial inner membrane"/>
    <property type="evidence" value="ECO:0000303"/>
    <property type="project" value="ComplexPortal"/>
</dbReference>
<dbReference type="GO" id="GO:0005762">
    <property type="term" value="C:mitochondrial large ribosomal subunit"/>
    <property type="evidence" value="ECO:0000303"/>
    <property type="project" value="ComplexPortal"/>
</dbReference>
<dbReference type="GO" id="GO:0005761">
    <property type="term" value="C:mitochondrial ribosome"/>
    <property type="evidence" value="ECO:0000314"/>
    <property type="project" value="MGI"/>
</dbReference>
<dbReference type="GO" id="GO:0005739">
    <property type="term" value="C:mitochondrion"/>
    <property type="evidence" value="ECO:0007005"/>
    <property type="project" value="MGI"/>
</dbReference>
<dbReference type="GO" id="GO:0003735">
    <property type="term" value="F:structural constituent of ribosome"/>
    <property type="evidence" value="ECO:0000314"/>
    <property type="project" value="MGI"/>
</dbReference>
<dbReference type="GO" id="GO:0032543">
    <property type="term" value="P:mitochondrial translation"/>
    <property type="evidence" value="ECO:0000250"/>
    <property type="project" value="UniProtKB"/>
</dbReference>
<dbReference type="GO" id="GO:0006412">
    <property type="term" value="P:translation"/>
    <property type="evidence" value="ECO:0000314"/>
    <property type="project" value="MGI"/>
</dbReference>
<dbReference type="InterPro" id="IPR016576">
    <property type="entry name" value="Ribosomal_mL63"/>
</dbReference>
<dbReference type="PANTHER" id="PTHR14520:SF4">
    <property type="entry name" value="LARGE RIBOSOMAL SUBUNIT PROTEIN ML63"/>
    <property type="match status" value="1"/>
</dbReference>
<dbReference type="PANTHER" id="PTHR14520">
    <property type="entry name" value="MITOCHONDRIAL RIBOSOMAL PROTEIN 63"/>
    <property type="match status" value="1"/>
</dbReference>
<dbReference type="Pfam" id="PF14978">
    <property type="entry name" value="MRP-63"/>
    <property type="match status" value="1"/>
</dbReference>
<dbReference type="PIRSF" id="PIRSF011124">
    <property type="entry name" value="MRP63"/>
    <property type="match status" value="1"/>
</dbReference>
<evidence type="ECO:0000250" key="1"/>
<evidence type="ECO:0000305" key="2"/>
<name>RT63_MOUSE</name>
<organism>
    <name type="scientific">Mus musculus</name>
    <name type="common">Mouse</name>
    <dbReference type="NCBI Taxonomy" id="10090"/>
    <lineage>
        <taxon>Eukaryota</taxon>
        <taxon>Metazoa</taxon>
        <taxon>Chordata</taxon>
        <taxon>Craniata</taxon>
        <taxon>Vertebrata</taxon>
        <taxon>Euteleostomi</taxon>
        <taxon>Mammalia</taxon>
        <taxon>Eutheria</taxon>
        <taxon>Euarchontoglires</taxon>
        <taxon>Glires</taxon>
        <taxon>Rodentia</taxon>
        <taxon>Myomorpha</taxon>
        <taxon>Muroidea</taxon>
        <taxon>Muridae</taxon>
        <taxon>Murinae</taxon>
        <taxon>Mus</taxon>
        <taxon>Mus</taxon>
    </lineage>
</organism>